<gene>
    <name evidence="1" type="primary">rpiA</name>
    <name type="ordered locus">lhv_0612</name>
</gene>
<organism>
    <name type="scientific">Lactobacillus helveticus (strain DPC 4571)</name>
    <dbReference type="NCBI Taxonomy" id="405566"/>
    <lineage>
        <taxon>Bacteria</taxon>
        <taxon>Bacillati</taxon>
        <taxon>Bacillota</taxon>
        <taxon>Bacilli</taxon>
        <taxon>Lactobacillales</taxon>
        <taxon>Lactobacillaceae</taxon>
        <taxon>Lactobacillus</taxon>
    </lineage>
</organism>
<dbReference type="EC" id="5.3.1.6" evidence="1"/>
<dbReference type="EMBL" id="CP000517">
    <property type="protein sequence ID" value="ABX26780.1"/>
    <property type="molecule type" value="Genomic_DNA"/>
</dbReference>
<dbReference type="RefSeq" id="WP_012211552.1">
    <property type="nucleotide sequence ID" value="NC_010080.1"/>
</dbReference>
<dbReference type="SMR" id="A8YU42"/>
<dbReference type="GeneID" id="72687438"/>
<dbReference type="KEGG" id="lhe:lhv_0612"/>
<dbReference type="eggNOG" id="COG0120">
    <property type="taxonomic scope" value="Bacteria"/>
</dbReference>
<dbReference type="HOGENOM" id="CLU_056590_1_0_9"/>
<dbReference type="UniPathway" id="UPA00115">
    <property type="reaction ID" value="UER00412"/>
</dbReference>
<dbReference type="Proteomes" id="UP000000790">
    <property type="component" value="Chromosome"/>
</dbReference>
<dbReference type="GO" id="GO:0005829">
    <property type="term" value="C:cytosol"/>
    <property type="evidence" value="ECO:0007669"/>
    <property type="project" value="TreeGrafter"/>
</dbReference>
<dbReference type="GO" id="GO:0004751">
    <property type="term" value="F:ribose-5-phosphate isomerase activity"/>
    <property type="evidence" value="ECO:0007669"/>
    <property type="project" value="UniProtKB-UniRule"/>
</dbReference>
<dbReference type="GO" id="GO:0006014">
    <property type="term" value="P:D-ribose metabolic process"/>
    <property type="evidence" value="ECO:0007669"/>
    <property type="project" value="TreeGrafter"/>
</dbReference>
<dbReference type="GO" id="GO:0009052">
    <property type="term" value="P:pentose-phosphate shunt, non-oxidative branch"/>
    <property type="evidence" value="ECO:0007669"/>
    <property type="project" value="UniProtKB-UniRule"/>
</dbReference>
<dbReference type="CDD" id="cd01398">
    <property type="entry name" value="RPI_A"/>
    <property type="match status" value="1"/>
</dbReference>
<dbReference type="FunFam" id="3.40.50.1360:FF:000001">
    <property type="entry name" value="Ribose-5-phosphate isomerase A"/>
    <property type="match status" value="1"/>
</dbReference>
<dbReference type="Gene3D" id="3.30.70.260">
    <property type="match status" value="1"/>
</dbReference>
<dbReference type="Gene3D" id="3.40.50.1360">
    <property type="match status" value="1"/>
</dbReference>
<dbReference type="HAMAP" id="MF_00170">
    <property type="entry name" value="Rib_5P_isom_A"/>
    <property type="match status" value="1"/>
</dbReference>
<dbReference type="InterPro" id="IPR037171">
    <property type="entry name" value="NagB/RpiA_transferase-like"/>
</dbReference>
<dbReference type="InterPro" id="IPR020672">
    <property type="entry name" value="Ribose5P_isomerase_typA_subgr"/>
</dbReference>
<dbReference type="InterPro" id="IPR004788">
    <property type="entry name" value="Ribose5P_isomerase_type_A"/>
</dbReference>
<dbReference type="NCBIfam" id="NF001924">
    <property type="entry name" value="PRK00702.1"/>
    <property type="match status" value="1"/>
</dbReference>
<dbReference type="NCBIfam" id="TIGR00021">
    <property type="entry name" value="rpiA"/>
    <property type="match status" value="1"/>
</dbReference>
<dbReference type="PANTHER" id="PTHR11934">
    <property type="entry name" value="RIBOSE-5-PHOSPHATE ISOMERASE"/>
    <property type="match status" value="1"/>
</dbReference>
<dbReference type="PANTHER" id="PTHR11934:SF0">
    <property type="entry name" value="RIBOSE-5-PHOSPHATE ISOMERASE"/>
    <property type="match status" value="1"/>
</dbReference>
<dbReference type="Pfam" id="PF06026">
    <property type="entry name" value="Rib_5-P_isom_A"/>
    <property type="match status" value="1"/>
</dbReference>
<dbReference type="SUPFAM" id="SSF75445">
    <property type="entry name" value="D-ribose-5-phosphate isomerase (RpiA), lid domain"/>
    <property type="match status" value="1"/>
</dbReference>
<dbReference type="SUPFAM" id="SSF100950">
    <property type="entry name" value="NagB/RpiA/CoA transferase-like"/>
    <property type="match status" value="1"/>
</dbReference>
<protein>
    <recommendedName>
        <fullName evidence="1">Ribose-5-phosphate isomerase A</fullName>
        <ecNumber evidence="1">5.3.1.6</ecNumber>
    </recommendedName>
    <alternativeName>
        <fullName evidence="1">Phosphoriboisomerase A</fullName>
        <shortName evidence="1">PRI</shortName>
    </alternativeName>
</protein>
<sequence length="230" mass="25103">MAKTEQDRLKKEAAEKAASMVKSGMILGVGTGSTVAFFIDALGKRKDNDGLKLKAIVTTSNRSKNQLEGLGFKVSELADVDQVDLTVDGSDRVADNLDGIKGGGGALTLEKNVAINSKKIIWIVDESKLVHRLGGFPLPVEVLPISCEQNFKRFKQEGLKPQWRMDSDKRYITHYGNYIIDLAADPVPAPHGLADYLDHTVGVVEHGLFLDMCDEVIIAHSDGTIEDKIK</sequence>
<reference key="1">
    <citation type="journal article" date="2008" name="J. Bacteriol.">
        <title>Genome sequence of Lactobacillus helveticus: an organism distinguished by selective gene loss and IS element expansion.</title>
        <authorList>
            <person name="Callanan M."/>
            <person name="Kaleta P."/>
            <person name="O'Callaghan J."/>
            <person name="O'Sullivan O."/>
            <person name="Jordan K."/>
            <person name="McAuliffe O."/>
            <person name="Sangrador-Vegas A."/>
            <person name="Slattery L."/>
            <person name="Fitzgerald G.F."/>
            <person name="Beresford T."/>
            <person name="Ross R.P."/>
        </authorList>
    </citation>
    <scope>NUCLEOTIDE SEQUENCE [LARGE SCALE GENOMIC DNA]</scope>
    <source>
        <strain>DPC 4571</strain>
    </source>
</reference>
<keyword id="KW-0413">Isomerase</keyword>
<name>RPIA_LACH4</name>
<proteinExistence type="inferred from homology"/>
<feature type="chain" id="PRO_1000071586" description="Ribose-5-phosphate isomerase A">
    <location>
        <begin position="1"/>
        <end position="230"/>
    </location>
</feature>
<feature type="active site" description="Proton acceptor" evidence="1">
    <location>
        <position position="110"/>
    </location>
</feature>
<feature type="binding site" evidence="1">
    <location>
        <begin position="31"/>
        <end position="34"/>
    </location>
    <ligand>
        <name>substrate</name>
    </ligand>
</feature>
<feature type="binding site" evidence="1">
    <location>
        <begin position="88"/>
        <end position="91"/>
    </location>
    <ligand>
        <name>substrate</name>
    </ligand>
</feature>
<feature type="binding site" evidence="1">
    <location>
        <begin position="101"/>
        <end position="104"/>
    </location>
    <ligand>
        <name>substrate</name>
    </ligand>
</feature>
<feature type="binding site" evidence="1">
    <location>
        <position position="128"/>
    </location>
    <ligand>
        <name>substrate</name>
    </ligand>
</feature>
<accession>A8YU42</accession>
<comment type="function">
    <text evidence="1">Catalyzes the reversible conversion of ribose-5-phosphate to ribulose 5-phosphate.</text>
</comment>
<comment type="catalytic activity">
    <reaction evidence="1">
        <text>aldehydo-D-ribose 5-phosphate = D-ribulose 5-phosphate</text>
        <dbReference type="Rhea" id="RHEA:14657"/>
        <dbReference type="ChEBI" id="CHEBI:58121"/>
        <dbReference type="ChEBI" id="CHEBI:58273"/>
        <dbReference type="EC" id="5.3.1.6"/>
    </reaction>
</comment>
<comment type="pathway">
    <text evidence="1">Carbohydrate degradation; pentose phosphate pathway; D-ribose 5-phosphate from D-ribulose 5-phosphate (non-oxidative stage): step 1/1.</text>
</comment>
<comment type="subunit">
    <text evidence="1">Homodimer.</text>
</comment>
<comment type="similarity">
    <text evidence="1">Belongs to the ribose 5-phosphate isomerase family.</text>
</comment>
<evidence type="ECO:0000255" key="1">
    <source>
        <dbReference type="HAMAP-Rule" id="MF_00170"/>
    </source>
</evidence>